<evidence type="ECO:0000255" key="1">
    <source>
        <dbReference type="HAMAP-Rule" id="MF_00472"/>
    </source>
</evidence>
<proteinExistence type="inferred from homology"/>
<name>UBIG_VIBC3</name>
<feature type="chain" id="PRO_1000072395" description="Ubiquinone biosynthesis O-methyltransferase">
    <location>
        <begin position="1"/>
        <end position="245"/>
    </location>
</feature>
<feature type="binding site" evidence="1">
    <location>
        <position position="49"/>
    </location>
    <ligand>
        <name>S-adenosyl-L-methionine</name>
        <dbReference type="ChEBI" id="CHEBI:59789"/>
    </ligand>
</feature>
<feature type="binding site" evidence="1">
    <location>
        <position position="69"/>
    </location>
    <ligand>
        <name>S-adenosyl-L-methionine</name>
        <dbReference type="ChEBI" id="CHEBI:59789"/>
    </ligand>
</feature>
<feature type="binding site" evidence="1">
    <location>
        <position position="90"/>
    </location>
    <ligand>
        <name>S-adenosyl-L-methionine</name>
        <dbReference type="ChEBI" id="CHEBI:59789"/>
    </ligand>
</feature>
<feature type="binding site" evidence="1">
    <location>
        <position position="134"/>
    </location>
    <ligand>
        <name>S-adenosyl-L-methionine</name>
        <dbReference type="ChEBI" id="CHEBI:59789"/>
    </ligand>
</feature>
<reference key="1">
    <citation type="submission" date="2007-03" db="EMBL/GenBank/DDBJ databases">
        <authorList>
            <person name="Heidelberg J."/>
        </authorList>
    </citation>
    <scope>NUCLEOTIDE SEQUENCE [LARGE SCALE GENOMIC DNA]</scope>
    <source>
        <strain>ATCC 39541 / Classical Ogawa 395 / O395</strain>
    </source>
</reference>
<reference key="2">
    <citation type="journal article" date="2008" name="PLoS ONE">
        <title>A recalibrated molecular clock and independent origins for the cholera pandemic clones.</title>
        <authorList>
            <person name="Feng L."/>
            <person name="Reeves P.R."/>
            <person name="Lan R."/>
            <person name="Ren Y."/>
            <person name="Gao C."/>
            <person name="Zhou Z."/>
            <person name="Ren Y."/>
            <person name="Cheng J."/>
            <person name="Wang W."/>
            <person name="Wang J."/>
            <person name="Qian W."/>
            <person name="Li D."/>
            <person name="Wang L."/>
        </authorList>
    </citation>
    <scope>NUCLEOTIDE SEQUENCE [LARGE SCALE GENOMIC DNA]</scope>
    <source>
        <strain>ATCC 39541 / Classical Ogawa 395 / O395</strain>
    </source>
</reference>
<gene>
    <name evidence="1" type="primary">ubiG</name>
    <name type="ordered locus">VC0395_A0876</name>
    <name type="ordered locus">VC395_1376</name>
</gene>
<protein>
    <recommendedName>
        <fullName evidence="1">Ubiquinone biosynthesis O-methyltransferase</fullName>
    </recommendedName>
    <alternativeName>
        <fullName evidence="1">2-polyprenyl-6-hydroxyphenol methylase</fullName>
        <ecNumber evidence="1">2.1.1.222</ecNumber>
    </alternativeName>
    <alternativeName>
        <fullName evidence="1">3-demethylubiquinone 3-O-methyltransferase</fullName>
        <ecNumber evidence="1">2.1.1.64</ecNumber>
    </alternativeName>
</protein>
<comment type="function">
    <text evidence="1">O-methyltransferase that catalyzes the 2 O-methylation steps in the ubiquinone biosynthetic pathway.</text>
</comment>
<comment type="catalytic activity">
    <reaction evidence="1">
        <text>a 3-demethylubiquinol + S-adenosyl-L-methionine = a ubiquinol + S-adenosyl-L-homocysteine + H(+)</text>
        <dbReference type="Rhea" id="RHEA:44380"/>
        <dbReference type="Rhea" id="RHEA-COMP:9566"/>
        <dbReference type="Rhea" id="RHEA-COMP:10914"/>
        <dbReference type="ChEBI" id="CHEBI:15378"/>
        <dbReference type="ChEBI" id="CHEBI:17976"/>
        <dbReference type="ChEBI" id="CHEBI:57856"/>
        <dbReference type="ChEBI" id="CHEBI:59789"/>
        <dbReference type="ChEBI" id="CHEBI:84422"/>
        <dbReference type="EC" id="2.1.1.64"/>
    </reaction>
</comment>
<comment type="catalytic activity">
    <reaction evidence="1">
        <text>a 3-(all-trans-polyprenyl)benzene-1,2-diol + S-adenosyl-L-methionine = a 2-methoxy-6-(all-trans-polyprenyl)phenol + S-adenosyl-L-homocysteine + H(+)</text>
        <dbReference type="Rhea" id="RHEA:31411"/>
        <dbReference type="Rhea" id="RHEA-COMP:9550"/>
        <dbReference type="Rhea" id="RHEA-COMP:9551"/>
        <dbReference type="ChEBI" id="CHEBI:15378"/>
        <dbReference type="ChEBI" id="CHEBI:57856"/>
        <dbReference type="ChEBI" id="CHEBI:59789"/>
        <dbReference type="ChEBI" id="CHEBI:62729"/>
        <dbReference type="ChEBI" id="CHEBI:62731"/>
        <dbReference type="EC" id="2.1.1.222"/>
    </reaction>
</comment>
<comment type="pathway">
    <text evidence="1">Cofactor biosynthesis; ubiquinone biosynthesis.</text>
</comment>
<comment type="similarity">
    <text evidence="1">Belongs to the methyltransferase superfamily. UbiG/COQ3 family.</text>
</comment>
<sequence length="245" mass="27238">MASIDLASTPLTATQNVDPNEIKKFEDMASRWWDLEGEFKPLHQINPLRLNYVLEKANGLFGKRVLDVGCGGGILAESMAREGAQVTGLDMGKEPLEVARLHALETGTKLTYIQSTVEAHAEANPHTYDVVTCMEMLEHVPDPLSVIQSCAKLVKPGGHVFFSTLNRNVKSYLFAIVGAEKLLKIVPEGTHDHNKFIRPSELLKMVDHTALQEQGITGLHYNPFTDTYRLGSNVDVNYIVHTRLF</sequence>
<organism>
    <name type="scientific">Vibrio cholerae serotype O1 (strain ATCC 39541 / Classical Ogawa 395 / O395)</name>
    <dbReference type="NCBI Taxonomy" id="345073"/>
    <lineage>
        <taxon>Bacteria</taxon>
        <taxon>Pseudomonadati</taxon>
        <taxon>Pseudomonadota</taxon>
        <taxon>Gammaproteobacteria</taxon>
        <taxon>Vibrionales</taxon>
        <taxon>Vibrionaceae</taxon>
        <taxon>Vibrio</taxon>
    </lineage>
</organism>
<keyword id="KW-0489">Methyltransferase</keyword>
<keyword id="KW-0949">S-adenosyl-L-methionine</keyword>
<keyword id="KW-0808">Transferase</keyword>
<keyword id="KW-0831">Ubiquinone biosynthesis</keyword>
<dbReference type="EC" id="2.1.1.222" evidence="1"/>
<dbReference type="EC" id="2.1.1.64" evidence="1"/>
<dbReference type="EMBL" id="CP000627">
    <property type="protein sequence ID" value="ABQ21578.1"/>
    <property type="molecule type" value="Genomic_DNA"/>
</dbReference>
<dbReference type="EMBL" id="CP001235">
    <property type="protein sequence ID" value="ACP09384.1"/>
    <property type="molecule type" value="Genomic_DNA"/>
</dbReference>
<dbReference type="RefSeq" id="WP_000146463.1">
    <property type="nucleotide sequence ID" value="NZ_JAACZH010000002.1"/>
</dbReference>
<dbReference type="SMR" id="A5F1U0"/>
<dbReference type="GeneID" id="89514221"/>
<dbReference type="KEGG" id="vco:VC0395_A0876"/>
<dbReference type="KEGG" id="vcr:VC395_1376"/>
<dbReference type="PATRIC" id="fig|345073.21.peg.1335"/>
<dbReference type="eggNOG" id="COG2227">
    <property type="taxonomic scope" value="Bacteria"/>
</dbReference>
<dbReference type="HOGENOM" id="CLU_042432_5_0_6"/>
<dbReference type="OrthoDB" id="9801538at2"/>
<dbReference type="UniPathway" id="UPA00232"/>
<dbReference type="Proteomes" id="UP000000249">
    <property type="component" value="Chromosome 2"/>
</dbReference>
<dbReference type="GO" id="GO:0102208">
    <property type="term" value="F:2-polyprenyl-6-hydroxyphenol methylase activity"/>
    <property type="evidence" value="ECO:0007669"/>
    <property type="project" value="UniProtKB-EC"/>
</dbReference>
<dbReference type="GO" id="GO:0061542">
    <property type="term" value="F:3-demethylubiquinol 3-O-methyltransferase activity"/>
    <property type="evidence" value="ECO:0007669"/>
    <property type="project" value="UniProtKB-UniRule"/>
</dbReference>
<dbReference type="GO" id="GO:0010420">
    <property type="term" value="F:polyprenyldihydroxybenzoate methyltransferase activity"/>
    <property type="evidence" value="ECO:0007669"/>
    <property type="project" value="InterPro"/>
</dbReference>
<dbReference type="GO" id="GO:0032259">
    <property type="term" value="P:methylation"/>
    <property type="evidence" value="ECO:0007669"/>
    <property type="project" value="UniProtKB-KW"/>
</dbReference>
<dbReference type="CDD" id="cd02440">
    <property type="entry name" value="AdoMet_MTases"/>
    <property type="match status" value="1"/>
</dbReference>
<dbReference type="FunFam" id="3.40.50.150:FF:000028">
    <property type="entry name" value="Ubiquinone biosynthesis O-methyltransferase"/>
    <property type="match status" value="1"/>
</dbReference>
<dbReference type="Gene3D" id="3.40.50.150">
    <property type="entry name" value="Vaccinia Virus protein VP39"/>
    <property type="match status" value="1"/>
</dbReference>
<dbReference type="HAMAP" id="MF_00472">
    <property type="entry name" value="UbiG"/>
    <property type="match status" value="1"/>
</dbReference>
<dbReference type="InterPro" id="IPR029063">
    <property type="entry name" value="SAM-dependent_MTases_sf"/>
</dbReference>
<dbReference type="InterPro" id="IPR010233">
    <property type="entry name" value="UbiG_MeTrfase"/>
</dbReference>
<dbReference type="NCBIfam" id="TIGR01983">
    <property type="entry name" value="UbiG"/>
    <property type="match status" value="1"/>
</dbReference>
<dbReference type="PANTHER" id="PTHR43464">
    <property type="entry name" value="METHYLTRANSFERASE"/>
    <property type="match status" value="1"/>
</dbReference>
<dbReference type="PANTHER" id="PTHR43464:SF19">
    <property type="entry name" value="UBIQUINONE BIOSYNTHESIS O-METHYLTRANSFERASE, MITOCHONDRIAL"/>
    <property type="match status" value="1"/>
</dbReference>
<dbReference type="Pfam" id="PF13489">
    <property type="entry name" value="Methyltransf_23"/>
    <property type="match status" value="1"/>
</dbReference>
<dbReference type="SUPFAM" id="SSF53335">
    <property type="entry name" value="S-adenosyl-L-methionine-dependent methyltransferases"/>
    <property type="match status" value="1"/>
</dbReference>
<accession>A5F1U0</accession>
<accession>C3M018</accession>